<proteinExistence type="evidence at protein level"/>
<sequence>RPSFCNLPVKPGPCSGFFSAFYYSQKTNKCHSFTYGGCRGNGNRFRTIEECRRTCVG</sequence>
<protein>
    <recommendedName>
        <fullName evidence="4">Mambaquaretin-4</fullName>
        <shortName evidence="4">MQ4</shortName>
    </recommendedName>
    <alternativeName>
        <fullName evidence="4">Upsilon-Dv2c</fullName>
    </alternativeName>
</protein>
<keyword id="KW-0903">Direct protein sequencing</keyword>
<keyword id="KW-1015">Disulfide bond</keyword>
<keyword id="KW-1213">G-protein coupled receptor impairing toxin</keyword>
<keyword id="KW-0964">Secreted</keyword>
<keyword id="KW-0800">Toxin</keyword>
<comment type="function">
    <text evidence="3">Interacts with vasopressin V2 receptor (V2R/AVPR2), probably in a selective manner. Inhibits vasopressin binding human V2R in the nanomolar range (Ki=7.34 nM), and also potently inhibits vasopressin-induced cAMP production (IC(50)=26 nM). In vivo, intraperitoneal injection of this protein into rats increases diuresis by 8.6-fold, without any loss of electrolytes.</text>
</comment>
<comment type="subcellular location">
    <subcellularLocation>
        <location evidence="3">Secreted</location>
    </subcellularLocation>
</comment>
<comment type="tissue specificity">
    <text evidence="6">Expressed by the venom gland.</text>
</comment>
<comment type="domain">
    <text evidence="1">Exploits its two major loops and engages more positions in its interaction with V2R. The pharmacophore defined by numerous amino acids positioned in loop 1 (9 to 18) and loop 2 (34, 39 and 44) may be at the origin of the absolute selectivity of this protein for V2R.</text>
</comment>
<comment type="mass spectrometry">
    <text>Monoisotopic mass.</text>
</comment>
<comment type="similarity">
    <text evidence="5">Belongs to the venom Kunitz-type family.</text>
</comment>
<name>MAMB4_DENVI</name>
<reference key="1">
    <citation type="journal article" date="2022" name="Br. J. Pharmacol.">
        <title>A new Kunitz-type snake toxin family associated with an original mode of interaction with the vasopressin 2 receptor.</title>
        <authorList>
            <person name="Droctove L."/>
            <person name="Ciolek J."/>
            <person name="Mendre C."/>
            <person name="Chorfa A."/>
            <person name="Huerta P."/>
            <person name="Carvalho C."/>
            <person name="Gouin C."/>
            <person name="Lancien M."/>
            <person name="Stanajic-Petrovic G."/>
            <person name="Braco L."/>
            <person name="Blanchet G."/>
            <person name="Upert G."/>
            <person name="De Pauw G."/>
            <person name="Barbe P."/>
            <person name="Keck M."/>
            <person name="Mourier G."/>
            <person name="Mouillac B."/>
            <person name="Denis S."/>
            <person name="Rodriguez de la Vega R.C."/>
            <person name="Quinton L."/>
            <person name="Gilles N."/>
        </authorList>
    </citation>
    <scope>PROTEIN SEQUENCE</scope>
    <scope>FUNCTION</scope>
    <scope>BIOASSAY</scope>
    <scope>SUBCELLULAR LOCATION</scope>
    <scope>SYNTHESIS</scope>
    <scope>MASS SPECTROMETRY</scope>
    <source>
        <tissue>Venom</tissue>
    </source>
</reference>
<organism>
    <name type="scientific">Dendroaspis viridis</name>
    <name type="common">Western green mamba</name>
    <dbReference type="NCBI Taxonomy" id="8621"/>
    <lineage>
        <taxon>Eukaryota</taxon>
        <taxon>Metazoa</taxon>
        <taxon>Chordata</taxon>
        <taxon>Craniata</taxon>
        <taxon>Vertebrata</taxon>
        <taxon>Euteleostomi</taxon>
        <taxon>Lepidosauria</taxon>
        <taxon>Squamata</taxon>
        <taxon>Bifurcata</taxon>
        <taxon>Unidentata</taxon>
        <taxon>Episquamata</taxon>
        <taxon>Toxicofera</taxon>
        <taxon>Serpentes</taxon>
        <taxon>Colubroidea</taxon>
        <taxon>Elapidae</taxon>
        <taxon>Elapinae</taxon>
        <taxon>Dendroaspis</taxon>
    </lineage>
</organism>
<accession>C0HLA7</accession>
<evidence type="ECO:0000250" key="1">
    <source>
        <dbReference type="UniProtKB" id="A0A1Z0YU59"/>
    </source>
</evidence>
<evidence type="ECO:0000255" key="2">
    <source>
        <dbReference type="PROSITE-ProRule" id="PRU00031"/>
    </source>
</evidence>
<evidence type="ECO:0000269" key="3">
    <source>
    </source>
</evidence>
<evidence type="ECO:0000303" key="4">
    <source>
    </source>
</evidence>
<evidence type="ECO:0000305" key="5"/>
<evidence type="ECO:0000305" key="6">
    <source>
    </source>
</evidence>
<feature type="chain" id="PRO_0000457569" description="Mambaquaretin-4" evidence="3">
    <location>
        <begin position="1"/>
        <end position="57"/>
    </location>
</feature>
<feature type="domain" description="BPTI/Kunitz inhibitor" evidence="2">
    <location>
        <begin position="5"/>
        <end position="55"/>
    </location>
</feature>
<feature type="disulfide bond" evidence="1">
    <location>
        <begin position="5"/>
        <end position="55"/>
    </location>
</feature>
<feature type="disulfide bond" evidence="1">
    <location>
        <begin position="14"/>
        <end position="38"/>
    </location>
</feature>
<feature type="disulfide bond" evidence="1">
    <location>
        <begin position="30"/>
        <end position="51"/>
    </location>
</feature>
<dbReference type="SMR" id="C0HLA7"/>
<dbReference type="GO" id="GO:0005615">
    <property type="term" value="C:extracellular space"/>
    <property type="evidence" value="ECO:0007669"/>
    <property type="project" value="TreeGrafter"/>
</dbReference>
<dbReference type="GO" id="GO:0004867">
    <property type="term" value="F:serine-type endopeptidase inhibitor activity"/>
    <property type="evidence" value="ECO:0007669"/>
    <property type="project" value="InterPro"/>
</dbReference>
<dbReference type="GO" id="GO:0090729">
    <property type="term" value="F:toxin activity"/>
    <property type="evidence" value="ECO:0007669"/>
    <property type="project" value="UniProtKB-KW"/>
</dbReference>
<dbReference type="CDD" id="cd22595">
    <property type="entry name" value="Kunitz_dendrotoxin"/>
    <property type="match status" value="1"/>
</dbReference>
<dbReference type="FunFam" id="4.10.410.10:FF:000004">
    <property type="entry name" value="Tissue factor pathway inhibitor"/>
    <property type="match status" value="1"/>
</dbReference>
<dbReference type="Gene3D" id="4.10.410.10">
    <property type="entry name" value="Pancreatic trypsin inhibitor Kunitz domain"/>
    <property type="match status" value="1"/>
</dbReference>
<dbReference type="InterPro" id="IPR002223">
    <property type="entry name" value="Kunitz_BPTI"/>
</dbReference>
<dbReference type="InterPro" id="IPR036880">
    <property type="entry name" value="Kunitz_BPTI_sf"/>
</dbReference>
<dbReference type="InterPro" id="IPR020901">
    <property type="entry name" value="Prtase_inh_Kunz-CS"/>
</dbReference>
<dbReference type="InterPro" id="IPR050098">
    <property type="entry name" value="TFPI/VKTCI-like"/>
</dbReference>
<dbReference type="PANTHER" id="PTHR10083:SF217">
    <property type="entry name" value="BOOPHILIN-H2"/>
    <property type="match status" value="1"/>
</dbReference>
<dbReference type="PANTHER" id="PTHR10083">
    <property type="entry name" value="KUNITZ-TYPE PROTEASE INHIBITOR-RELATED"/>
    <property type="match status" value="1"/>
</dbReference>
<dbReference type="Pfam" id="PF00014">
    <property type="entry name" value="Kunitz_BPTI"/>
    <property type="match status" value="1"/>
</dbReference>
<dbReference type="PRINTS" id="PR00759">
    <property type="entry name" value="BASICPTASE"/>
</dbReference>
<dbReference type="SMART" id="SM00131">
    <property type="entry name" value="KU"/>
    <property type="match status" value="1"/>
</dbReference>
<dbReference type="SUPFAM" id="SSF57362">
    <property type="entry name" value="BPTI-like"/>
    <property type="match status" value="1"/>
</dbReference>
<dbReference type="PROSITE" id="PS00280">
    <property type="entry name" value="BPTI_KUNITZ_1"/>
    <property type="match status" value="1"/>
</dbReference>
<dbReference type="PROSITE" id="PS50279">
    <property type="entry name" value="BPTI_KUNITZ_2"/>
    <property type="match status" value="1"/>
</dbReference>